<sequence>MKKKQFLKESDVTAESVFFMKRRQVLKALGISAAALSLPHAAHADLLSWFKGNDRPPAPAGKPLEFSKPAAWQNNLPLTPVDKVSGYNNFYEFGLDKADPAANAGSLKTDPWTLKISGEVAKPLTLDHDDLTRRFPLEERIYRMRCVEAWSMVVPWIGFPLHKLLALAEPTSNAKYVAFETIYAPEQMPGQQDRFIGGGLKYPYVEGLRLDEAMHPLTLMTVGVYGKALPPQNGAPVRLIVPWKYGFKGIKSIVSIKLTRERPPTTWNLAAPDEYGFYANVNPHVDHPRWSQATERFIGSGGILDVQRQPTLLFNGYADQVASLYRGLDLRENF</sequence>
<keyword id="KW-0479">Metal-binding</keyword>
<keyword id="KW-0500">Molybdenum</keyword>
<keyword id="KW-0560">Oxidoreductase</keyword>
<keyword id="KW-0574">Periplasm</keyword>
<keyword id="KW-0732">Signal</keyword>
<dbReference type="EC" id="1.8.5.-" evidence="1"/>
<dbReference type="EMBL" id="CU928160">
    <property type="protein sequence ID" value="CAQ98901.1"/>
    <property type="molecule type" value="Genomic_DNA"/>
</dbReference>
<dbReference type="RefSeq" id="WP_000730130.1">
    <property type="nucleotide sequence ID" value="NC_011741.1"/>
</dbReference>
<dbReference type="SMR" id="B7M3A9"/>
<dbReference type="KEGG" id="ecr:ECIAI1_2051"/>
<dbReference type="HOGENOM" id="CLU_045520_0_0_6"/>
<dbReference type="GO" id="GO:0042597">
    <property type="term" value="C:periplasmic space"/>
    <property type="evidence" value="ECO:0007669"/>
    <property type="project" value="UniProtKB-SubCell"/>
</dbReference>
<dbReference type="GO" id="GO:0046872">
    <property type="term" value="F:metal ion binding"/>
    <property type="evidence" value="ECO:0007669"/>
    <property type="project" value="UniProtKB-KW"/>
</dbReference>
<dbReference type="GO" id="GO:0043546">
    <property type="term" value="F:molybdopterin cofactor binding"/>
    <property type="evidence" value="ECO:0007669"/>
    <property type="project" value="UniProtKB-UniRule"/>
</dbReference>
<dbReference type="GO" id="GO:0016672">
    <property type="term" value="F:oxidoreductase activity, acting on a sulfur group of donors, quinone or similar compound as acceptor"/>
    <property type="evidence" value="ECO:0007669"/>
    <property type="project" value="UniProtKB-UniRule"/>
</dbReference>
<dbReference type="GO" id="GO:0030091">
    <property type="term" value="P:protein repair"/>
    <property type="evidence" value="ECO:0007669"/>
    <property type="project" value="UniProtKB-UniRule"/>
</dbReference>
<dbReference type="CDD" id="cd02107">
    <property type="entry name" value="YedY_like_Moco"/>
    <property type="match status" value="1"/>
</dbReference>
<dbReference type="FunFam" id="3.90.420.10:FF:000001">
    <property type="entry name" value="Protein-methionine-sulfoxide reductase catalytic subunit MsrP"/>
    <property type="match status" value="1"/>
</dbReference>
<dbReference type="Gene3D" id="3.90.420.10">
    <property type="entry name" value="Oxidoreductase, molybdopterin-binding domain"/>
    <property type="match status" value="1"/>
</dbReference>
<dbReference type="HAMAP" id="MF_01206">
    <property type="entry name" value="MsrP"/>
    <property type="match status" value="1"/>
</dbReference>
<dbReference type="InterPro" id="IPR022867">
    <property type="entry name" value="MsrP"/>
</dbReference>
<dbReference type="InterPro" id="IPR000572">
    <property type="entry name" value="OxRdtase_Mopterin-bd_dom"/>
</dbReference>
<dbReference type="InterPro" id="IPR036374">
    <property type="entry name" value="OxRdtase_Mopterin-bd_sf"/>
</dbReference>
<dbReference type="InterPro" id="IPR006311">
    <property type="entry name" value="TAT_signal"/>
</dbReference>
<dbReference type="NCBIfam" id="NF003767">
    <property type="entry name" value="PRK05363.1"/>
    <property type="match status" value="1"/>
</dbReference>
<dbReference type="PANTHER" id="PTHR43032">
    <property type="entry name" value="PROTEIN-METHIONINE-SULFOXIDE REDUCTASE"/>
    <property type="match status" value="1"/>
</dbReference>
<dbReference type="PANTHER" id="PTHR43032:SF3">
    <property type="entry name" value="PROTEIN-METHIONINE-SULFOXIDE REDUCTASE CATALYTIC SUBUNIT MSRP"/>
    <property type="match status" value="1"/>
</dbReference>
<dbReference type="Pfam" id="PF00174">
    <property type="entry name" value="Oxidored_molyb"/>
    <property type="match status" value="1"/>
</dbReference>
<dbReference type="SUPFAM" id="SSF56524">
    <property type="entry name" value="Oxidoreductase molybdopterin-binding domain"/>
    <property type="match status" value="1"/>
</dbReference>
<dbReference type="PROSITE" id="PS51318">
    <property type="entry name" value="TAT"/>
    <property type="match status" value="1"/>
</dbReference>
<reference key="1">
    <citation type="journal article" date="2009" name="PLoS Genet.">
        <title>Organised genome dynamics in the Escherichia coli species results in highly diverse adaptive paths.</title>
        <authorList>
            <person name="Touchon M."/>
            <person name="Hoede C."/>
            <person name="Tenaillon O."/>
            <person name="Barbe V."/>
            <person name="Baeriswyl S."/>
            <person name="Bidet P."/>
            <person name="Bingen E."/>
            <person name="Bonacorsi S."/>
            <person name="Bouchier C."/>
            <person name="Bouvet O."/>
            <person name="Calteau A."/>
            <person name="Chiapello H."/>
            <person name="Clermont O."/>
            <person name="Cruveiller S."/>
            <person name="Danchin A."/>
            <person name="Diard M."/>
            <person name="Dossat C."/>
            <person name="Karoui M.E."/>
            <person name="Frapy E."/>
            <person name="Garry L."/>
            <person name="Ghigo J.M."/>
            <person name="Gilles A.M."/>
            <person name="Johnson J."/>
            <person name="Le Bouguenec C."/>
            <person name="Lescat M."/>
            <person name="Mangenot S."/>
            <person name="Martinez-Jehanne V."/>
            <person name="Matic I."/>
            <person name="Nassif X."/>
            <person name="Oztas S."/>
            <person name="Petit M.A."/>
            <person name="Pichon C."/>
            <person name="Rouy Z."/>
            <person name="Ruf C.S."/>
            <person name="Schneider D."/>
            <person name="Tourret J."/>
            <person name="Vacherie B."/>
            <person name="Vallenet D."/>
            <person name="Medigue C."/>
            <person name="Rocha E.P.C."/>
            <person name="Denamur E."/>
        </authorList>
    </citation>
    <scope>NUCLEOTIDE SEQUENCE [LARGE SCALE GENOMIC DNA]</scope>
    <source>
        <strain>IAI1</strain>
    </source>
</reference>
<comment type="function">
    <text evidence="1">Part of the MsrPQ system that repairs oxidized periplasmic proteins containing methionine sulfoxide residues (Met-O), using respiratory chain electrons. Thus protects these proteins from oxidative-stress damage caused by reactive species of oxygen and chlorine generated by the host defense mechanisms. MsrPQ is essential for the maintenance of envelope integrity under bleach stress, rescuing a wide series of structurally unrelated periplasmic proteins from methionine oxidation, including the primary periplasmic chaperone SurA and the lipoprotein Pal. The catalytic subunit MsrP is non-stereospecific, being able to reduce both (R-) and (S-) diastereoisomers of methionine sulfoxide.</text>
</comment>
<comment type="catalytic activity">
    <reaction evidence="1">
        <text>L-methionyl-[protein] + a quinone + H2O = L-methionyl-(S)-S-oxide-[protein] + a quinol</text>
        <dbReference type="Rhea" id="RHEA:51292"/>
        <dbReference type="Rhea" id="RHEA-COMP:12313"/>
        <dbReference type="Rhea" id="RHEA-COMP:12315"/>
        <dbReference type="ChEBI" id="CHEBI:15377"/>
        <dbReference type="ChEBI" id="CHEBI:16044"/>
        <dbReference type="ChEBI" id="CHEBI:24646"/>
        <dbReference type="ChEBI" id="CHEBI:44120"/>
        <dbReference type="ChEBI" id="CHEBI:132124"/>
    </reaction>
</comment>
<comment type="catalytic activity">
    <reaction evidence="1">
        <text>L-methionyl-[protein] + a quinone + H2O = L-methionyl-(R)-S-oxide-[protein] + a quinol</text>
        <dbReference type="Rhea" id="RHEA:51296"/>
        <dbReference type="Rhea" id="RHEA-COMP:12313"/>
        <dbReference type="Rhea" id="RHEA-COMP:12314"/>
        <dbReference type="ChEBI" id="CHEBI:15377"/>
        <dbReference type="ChEBI" id="CHEBI:16044"/>
        <dbReference type="ChEBI" id="CHEBI:24646"/>
        <dbReference type="ChEBI" id="CHEBI:45764"/>
        <dbReference type="ChEBI" id="CHEBI:132124"/>
    </reaction>
</comment>
<comment type="cofactor">
    <cofactor evidence="1">
        <name>Mo-molybdopterin</name>
        <dbReference type="ChEBI" id="CHEBI:71302"/>
    </cofactor>
    <text evidence="1">Binds 1 Mo-molybdopterin (Mo-MPT) cofactor per subunit.</text>
</comment>
<comment type="subunit">
    <text evidence="1">Heterodimer of a catalytic subunit (MsrP) and a heme-binding subunit (MsrQ).</text>
</comment>
<comment type="subcellular location">
    <subcellularLocation>
        <location evidence="1">Periplasm</location>
    </subcellularLocation>
    <text evidence="1">Is attached to the inner membrane when interacting with the MsrQ subunit.</text>
</comment>
<comment type="PTM">
    <text evidence="1">Predicted to be exported by the Tat system. The position of the signal peptide cleavage has not been experimentally proven.</text>
</comment>
<comment type="similarity">
    <text evidence="1">Belongs to the MsrP family.</text>
</comment>
<proteinExistence type="inferred from homology"/>
<organism>
    <name type="scientific">Escherichia coli O8 (strain IAI1)</name>
    <dbReference type="NCBI Taxonomy" id="585034"/>
    <lineage>
        <taxon>Bacteria</taxon>
        <taxon>Pseudomonadati</taxon>
        <taxon>Pseudomonadota</taxon>
        <taxon>Gammaproteobacteria</taxon>
        <taxon>Enterobacterales</taxon>
        <taxon>Enterobacteriaceae</taxon>
        <taxon>Escherichia</taxon>
    </lineage>
</organism>
<evidence type="ECO:0000255" key="1">
    <source>
        <dbReference type="HAMAP-Rule" id="MF_01206"/>
    </source>
</evidence>
<name>MSRP_ECO8A</name>
<feature type="signal peptide" description="Tat-type signal" evidence="1">
    <location>
        <begin position="1"/>
        <end position="44"/>
    </location>
</feature>
<feature type="chain" id="PRO_1000138712" description="Protein-methionine-sulfoxide reductase catalytic subunit MsrP" evidence="1">
    <location>
        <begin position="45"/>
        <end position="334"/>
    </location>
</feature>
<feature type="binding site" evidence="1">
    <location>
        <position position="88"/>
    </location>
    <ligand>
        <name>Mo-molybdopterin</name>
        <dbReference type="ChEBI" id="CHEBI:71302"/>
    </ligand>
</feature>
<feature type="binding site" evidence="1">
    <location>
        <begin position="91"/>
        <end position="92"/>
    </location>
    <ligand>
        <name>Mo-molybdopterin</name>
        <dbReference type="ChEBI" id="CHEBI:71302"/>
    </ligand>
</feature>
<feature type="binding site" evidence="1">
    <location>
        <position position="146"/>
    </location>
    <ligand>
        <name>Mo-molybdopterin</name>
        <dbReference type="ChEBI" id="CHEBI:71302"/>
    </ligand>
    <ligandPart>
        <name>Mo</name>
        <dbReference type="ChEBI" id="CHEBI:28685"/>
    </ligandPart>
</feature>
<feature type="binding site" evidence="1">
    <location>
        <position position="181"/>
    </location>
    <ligand>
        <name>Mo-molybdopterin</name>
        <dbReference type="ChEBI" id="CHEBI:71302"/>
    </ligand>
</feature>
<feature type="binding site" evidence="1">
    <location>
        <position position="233"/>
    </location>
    <ligand>
        <name>Mo-molybdopterin</name>
        <dbReference type="ChEBI" id="CHEBI:71302"/>
    </ligand>
</feature>
<feature type="binding site" evidence="1">
    <location>
        <position position="238"/>
    </location>
    <ligand>
        <name>Mo-molybdopterin</name>
        <dbReference type="ChEBI" id="CHEBI:71302"/>
    </ligand>
</feature>
<feature type="binding site" evidence="1">
    <location>
        <begin position="249"/>
        <end position="251"/>
    </location>
    <ligand>
        <name>Mo-molybdopterin</name>
        <dbReference type="ChEBI" id="CHEBI:71302"/>
    </ligand>
</feature>
<accession>B7M3A9</accession>
<protein>
    <recommendedName>
        <fullName evidence="1">Protein-methionine-sulfoxide reductase catalytic subunit MsrP</fullName>
        <ecNumber evidence="1">1.8.5.-</ecNumber>
    </recommendedName>
</protein>
<gene>
    <name evidence="1" type="primary">msrP</name>
    <name type="ordered locus">ECIAI1_2051</name>
</gene>